<reference key="1">
    <citation type="submission" date="2008-05" db="EMBL/GenBank/DDBJ databases">
        <title>Complete sequence of Shigella boydii serotype 18 strain BS512.</title>
        <authorList>
            <person name="Rasko D.A."/>
            <person name="Rosovitz M."/>
            <person name="Maurelli A.T."/>
            <person name="Myers G."/>
            <person name="Seshadri R."/>
            <person name="Cer R."/>
            <person name="Jiang L."/>
            <person name="Ravel J."/>
            <person name="Sebastian Y."/>
        </authorList>
    </citation>
    <scope>NUCLEOTIDE SEQUENCE [LARGE SCALE GENOMIC DNA]</scope>
    <source>
        <strain>CDC 3083-94 / BS512</strain>
    </source>
</reference>
<proteinExistence type="inferred from homology"/>
<gene>
    <name evidence="1" type="primary">obg</name>
    <name type="ordered locus">SbBS512_E3587</name>
</gene>
<name>OBG_SHIB3</name>
<protein>
    <recommendedName>
        <fullName evidence="1">GTPase Obg</fullName>
        <ecNumber evidence="1">3.6.5.-</ecNumber>
    </recommendedName>
    <alternativeName>
        <fullName evidence="1">GTP-binding protein Obg</fullName>
    </alternativeName>
</protein>
<evidence type="ECO:0000255" key="1">
    <source>
        <dbReference type="HAMAP-Rule" id="MF_01454"/>
    </source>
</evidence>
<evidence type="ECO:0000255" key="2">
    <source>
        <dbReference type="PROSITE-ProRule" id="PRU01231"/>
    </source>
</evidence>
<evidence type="ECO:0000256" key="3">
    <source>
        <dbReference type="SAM" id="MobiDB-lite"/>
    </source>
</evidence>
<accession>B2U1Z4</accession>
<keyword id="KW-0963">Cytoplasm</keyword>
<keyword id="KW-0342">GTP-binding</keyword>
<keyword id="KW-0378">Hydrolase</keyword>
<keyword id="KW-0460">Magnesium</keyword>
<keyword id="KW-0479">Metal-binding</keyword>
<keyword id="KW-0547">Nucleotide-binding</keyword>
<keyword id="KW-1185">Reference proteome</keyword>
<feature type="chain" id="PRO_0000386254" description="GTPase Obg">
    <location>
        <begin position="1"/>
        <end position="390"/>
    </location>
</feature>
<feature type="domain" description="Obg" evidence="2">
    <location>
        <begin position="1"/>
        <end position="159"/>
    </location>
</feature>
<feature type="domain" description="OBG-type G" evidence="1">
    <location>
        <begin position="160"/>
        <end position="333"/>
    </location>
</feature>
<feature type="region of interest" description="Disordered" evidence="3">
    <location>
        <begin position="127"/>
        <end position="147"/>
    </location>
</feature>
<feature type="compositionally biased region" description="Polar residues" evidence="3">
    <location>
        <begin position="129"/>
        <end position="145"/>
    </location>
</feature>
<feature type="binding site" evidence="1">
    <location>
        <begin position="166"/>
        <end position="173"/>
    </location>
    <ligand>
        <name>GTP</name>
        <dbReference type="ChEBI" id="CHEBI:37565"/>
    </ligand>
</feature>
<feature type="binding site" evidence="1">
    <location>
        <position position="173"/>
    </location>
    <ligand>
        <name>Mg(2+)</name>
        <dbReference type="ChEBI" id="CHEBI:18420"/>
    </ligand>
</feature>
<feature type="binding site" evidence="1">
    <location>
        <begin position="191"/>
        <end position="195"/>
    </location>
    <ligand>
        <name>GTP</name>
        <dbReference type="ChEBI" id="CHEBI:37565"/>
    </ligand>
</feature>
<feature type="binding site" evidence="1">
    <location>
        <position position="193"/>
    </location>
    <ligand>
        <name>Mg(2+)</name>
        <dbReference type="ChEBI" id="CHEBI:18420"/>
    </ligand>
</feature>
<feature type="binding site" evidence="1">
    <location>
        <begin position="213"/>
        <end position="216"/>
    </location>
    <ligand>
        <name>GTP</name>
        <dbReference type="ChEBI" id="CHEBI:37565"/>
    </ligand>
</feature>
<feature type="binding site" evidence="1">
    <location>
        <begin position="283"/>
        <end position="286"/>
    </location>
    <ligand>
        <name>GTP</name>
        <dbReference type="ChEBI" id="CHEBI:37565"/>
    </ligand>
</feature>
<feature type="binding site" evidence="1">
    <location>
        <begin position="314"/>
        <end position="316"/>
    </location>
    <ligand>
        <name>GTP</name>
        <dbReference type="ChEBI" id="CHEBI:37565"/>
    </ligand>
</feature>
<sequence>MKFVDEASILVVAGDGGNGCVSFRREKYIPKGGPDGGDGGDGGDVWMEADENLNTLIDYRFEKSFRAERGQNGASRDCTGKRGKDVTIKVPVGTRVIDQGTGETMGDMTKHGQRLLVAKGGWHGLGNTRFKSSVNRTPRQKTNGTPGDKRELLLELMLLADVGMLGMPNAGKSTFIRAVSAAKPKVADYPFTTLVPSLGVVRMDNEKSFVVADIPGLIEGAAEGAGLGIRFLKHLERCRVLLHLIDIDPIDGTDPVENARIIISELEKYSQDLAAKPRWLVFNKIDLLDKAEAEEKAKAIAEALGWEDKYYLISAASGLGVKDLCWDVMTFIIENPVVQAEEAKQPEKVEFMWDDYHRQQLEEIAEEDDEDWDDDWDEDDEEGVEFIYKR</sequence>
<organism>
    <name type="scientific">Shigella boydii serotype 18 (strain CDC 3083-94 / BS512)</name>
    <dbReference type="NCBI Taxonomy" id="344609"/>
    <lineage>
        <taxon>Bacteria</taxon>
        <taxon>Pseudomonadati</taxon>
        <taxon>Pseudomonadota</taxon>
        <taxon>Gammaproteobacteria</taxon>
        <taxon>Enterobacterales</taxon>
        <taxon>Enterobacteriaceae</taxon>
        <taxon>Shigella</taxon>
    </lineage>
</organism>
<dbReference type="EC" id="3.6.5.-" evidence="1"/>
<dbReference type="EMBL" id="CP001063">
    <property type="protein sequence ID" value="ACD10065.1"/>
    <property type="molecule type" value="Genomic_DNA"/>
</dbReference>
<dbReference type="SMR" id="B2U1Z4"/>
<dbReference type="STRING" id="344609.SbBS512_E3587"/>
<dbReference type="KEGG" id="sbc:SbBS512_E3587"/>
<dbReference type="HOGENOM" id="CLU_011747_2_0_6"/>
<dbReference type="Proteomes" id="UP000001030">
    <property type="component" value="Chromosome"/>
</dbReference>
<dbReference type="GO" id="GO:0005737">
    <property type="term" value="C:cytoplasm"/>
    <property type="evidence" value="ECO:0007669"/>
    <property type="project" value="UniProtKB-SubCell"/>
</dbReference>
<dbReference type="GO" id="GO:0005525">
    <property type="term" value="F:GTP binding"/>
    <property type="evidence" value="ECO:0007669"/>
    <property type="project" value="UniProtKB-UniRule"/>
</dbReference>
<dbReference type="GO" id="GO:0003924">
    <property type="term" value="F:GTPase activity"/>
    <property type="evidence" value="ECO:0007669"/>
    <property type="project" value="UniProtKB-UniRule"/>
</dbReference>
<dbReference type="GO" id="GO:0000287">
    <property type="term" value="F:magnesium ion binding"/>
    <property type="evidence" value="ECO:0007669"/>
    <property type="project" value="InterPro"/>
</dbReference>
<dbReference type="GO" id="GO:0042254">
    <property type="term" value="P:ribosome biogenesis"/>
    <property type="evidence" value="ECO:0007669"/>
    <property type="project" value="UniProtKB-UniRule"/>
</dbReference>
<dbReference type="CDD" id="cd01898">
    <property type="entry name" value="Obg"/>
    <property type="match status" value="1"/>
</dbReference>
<dbReference type="FunFam" id="2.70.210.12:FF:000001">
    <property type="entry name" value="GTPase Obg"/>
    <property type="match status" value="1"/>
</dbReference>
<dbReference type="FunFam" id="3.40.50.300:FF:000185">
    <property type="entry name" value="GTPase Obg"/>
    <property type="match status" value="1"/>
</dbReference>
<dbReference type="Gene3D" id="2.70.210.12">
    <property type="entry name" value="GTP1/OBG domain"/>
    <property type="match status" value="1"/>
</dbReference>
<dbReference type="Gene3D" id="3.40.50.300">
    <property type="entry name" value="P-loop containing nucleotide triphosphate hydrolases"/>
    <property type="match status" value="1"/>
</dbReference>
<dbReference type="HAMAP" id="MF_01454">
    <property type="entry name" value="GTPase_Obg"/>
    <property type="match status" value="1"/>
</dbReference>
<dbReference type="InterPro" id="IPR031167">
    <property type="entry name" value="G_OBG"/>
</dbReference>
<dbReference type="InterPro" id="IPR006073">
    <property type="entry name" value="GTP-bd"/>
</dbReference>
<dbReference type="InterPro" id="IPR014100">
    <property type="entry name" value="GTP-bd_Obg/CgtA"/>
</dbReference>
<dbReference type="InterPro" id="IPR006074">
    <property type="entry name" value="GTP1-OBG_CS"/>
</dbReference>
<dbReference type="InterPro" id="IPR006169">
    <property type="entry name" value="GTP1_OBG_dom"/>
</dbReference>
<dbReference type="InterPro" id="IPR036726">
    <property type="entry name" value="GTP1_OBG_dom_sf"/>
</dbReference>
<dbReference type="InterPro" id="IPR045086">
    <property type="entry name" value="OBG_GTPase"/>
</dbReference>
<dbReference type="InterPro" id="IPR027417">
    <property type="entry name" value="P-loop_NTPase"/>
</dbReference>
<dbReference type="NCBIfam" id="TIGR02729">
    <property type="entry name" value="Obg_CgtA"/>
    <property type="match status" value="1"/>
</dbReference>
<dbReference type="NCBIfam" id="NF008955">
    <property type="entry name" value="PRK12297.1"/>
    <property type="match status" value="1"/>
</dbReference>
<dbReference type="NCBIfam" id="NF008956">
    <property type="entry name" value="PRK12299.1"/>
    <property type="match status" value="1"/>
</dbReference>
<dbReference type="PANTHER" id="PTHR11702">
    <property type="entry name" value="DEVELOPMENTALLY REGULATED GTP-BINDING PROTEIN-RELATED"/>
    <property type="match status" value="1"/>
</dbReference>
<dbReference type="PANTHER" id="PTHR11702:SF31">
    <property type="entry name" value="MITOCHONDRIAL RIBOSOME-ASSOCIATED GTPASE 2"/>
    <property type="match status" value="1"/>
</dbReference>
<dbReference type="Pfam" id="PF01018">
    <property type="entry name" value="GTP1_OBG"/>
    <property type="match status" value="1"/>
</dbReference>
<dbReference type="Pfam" id="PF01926">
    <property type="entry name" value="MMR_HSR1"/>
    <property type="match status" value="1"/>
</dbReference>
<dbReference type="PIRSF" id="PIRSF002401">
    <property type="entry name" value="GTP_bd_Obg/CgtA"/>
    <property type="match status" value="1"/>
</dbReference>
<dbReference type="PRINTS" id="PR00326">
    <property type="entry name" value="GTP1OBG"/>
</dbReference>
<dbReference type="SUPFAM" id="SSF82051">
    <property type="entry name" value="Obg GTP-binding protein N-terminal domain"/>
    <property type="match status" value="1"/>
</dbReference>
<dbReference type="SUPFAM" id="SSF52540">
    <property type="entry name" value="P-loop containing nucleoside triphosphate hydrolases"/>
    <property type="match status" value="1"/>
</dbReference>
<dbReference type="PROSITE" id="PS51710">
    <property type="entry name" value="G_OBG"/>
    <property type="match status" value="1"/>
</dbReference>
<dbReference type="PROSITE" id="PS00905">
    <property type="entry name" value="GTP1_OBG"/>
    <property type="match status" value="1"/>
</dbReference>
<dbReference type="PROSITE" id="PS51883">
    <property type="entry name" value="OBG"/>
    <property type="match status" value="1"/>
</dbReference>
<comment type="function">
    <text evidence="1">An essential GTPase which binds GTP, GDP and possibly (p)ppGpp with moderate affinity, with high nucleotide exchange rates and a fairly low GTP hydrolysis rate. Plays a role in control of the cell cycle, stress response, ribosome biogenesis and in those bacteria that undergo differentiation, in morphogenesis control.</text>
</comment>
<comment type="cofactor">
    <cofactor evidence="1">
        <name>Mg(2+)</name>
        <dbReference type="ChEBI" id="CHEBI:18420"/>
    </cofactor>
</comment>
<comment type="subunit">
    <text evidence="1">Monomer.</text>
</comment>
<comment type="subcellular location">
    <subcellularLocation>
        <location evidence="1">Cytoplasm</location>
    </subcellularLocation>
</comment>
<comment type="similarity">
    <text evidence="1">Belongs to the TRAFAC class OBG-HflX-like GTPase superfamily. OBG GTPase family.</text>
</comment>